<protein>
    <recommendedName>
        <fullName evidence="1">Large ribosomal subunit protein bL21</fullName>
    </recommendedName>
    <alternativeName>
        <fullName evidence="2">50S ribosomal protein L21</fullName>
    </alternativeName>
</protein>
<feature type="chain" id="PRO_1000143771" description="Large ribosomal subunit protein bL21">
    <location>
        <begin position="1"/>
        <end position="98"/>
    </location>
</feature>
<keyword id="KW-1185">Reference proteome</keyword>
<keyword id="KW-0687">Ribonucleoprotein</keyword>
<keyword id="KW-0689">Ribosomal protein</keyword>
<keyword id="KW-0694">RNA-binding</keyword>
<keyword id="KW-0699">rRNA-binding</keyword>
<gene>
    <name evidence="1" type="primary">rplU</name>
    <name type="ordered locus">Ctha_0096</name>
</gene>
<name>RL21_CHLT3</name>
<evidence type="ECO:0000255" key="1">
    <source>
        <dbReference type="HAMAP-Rule" id="MF_01363"/>
    </source>
</evidence>
<evidence type="ECO:0000305" key="2"/>
<comment type="function">
    <text evidence="1">This protein binds to 23S rRNA in the presence of protein L20.</text>
</comment>
<comment type="subunit">
    <text evidence="1">Part of the 50S ribosomal subunit. Contacts protein L20.</text>
</comment>
<comment type="similarity">
    <text evidence="1">Belongs to the bacterial ribosomal protein bL21 family.</text>
</comment>
<dbReference type="EMBL" id="CP001100">
    <property type="protein sequence ID" value="ACF12567.1"/>
    <property type="molecule type" value="Genomic_DNA"/>
</dbReference>
<dbReference type="RefSeq" id="WP_012498651.1">
    <property type="nucleotide sequence ID" value="NC_011026.1"/>
</dbReference>
<dbReference type="SMR" id="B3QSH6"/>
<dbReference type="STRING" id="517418.Ctha_0096"/>
<dbReference type="KEGG" id="cts:Ctha_0096"/>
<dbReference type="eggNOG" id="COG0261">
    <property type="taxonomic scope" value="Bacteria"/>
</dbReference>
<dbReference type="HOGENOM" id="CLU_061463_3_2_10"/>
<dbReference type="OrthoDB" id="9813334at2"/>
<dbReference type="Proteomes" id="UP000001208">
    <property type="component" value="Chromosome"/>
</dbReference>
<dbReference type="GO" id="GO:0005737">
    <property type="term" value="C:cytoplasm"/>
    <property type="evidence" value="ECO:0007669"/>
    <property type="project" value="UniProtKB-ARBA"/>
</dbReference>
<dbReference type="GO" id="GO:1990904">
    <property type="term" value="C:ribonucleoprotein complex"/>
    <property type="evidence" value="ECO:0007669"/>
    <property type="project" value="UniProtKB-KW"/>
</dbReference>
<dbReference type="GO" id="GO:0005840">
    <property type="term" value="C:ribosome"/>
    <property type="evidence" value="ECO:0007669"/>
    <property type="project" value="UniProtKB-KW"/>
</dbReference>
<dbReference type="GO" id="GO:0019843">
    <property type="term" value="F:rRNA binding"/>
    <property type="evidence" value="ECO:0007669"/>
    <property type="project" value="UniProtKB-UniRule"/>
</dbReference>
<dbReference type="GO" id="GO:0003735">
    <property type="term" value="F:structural constituent of ribosome"/>
    <property type="evidence" value="ECO:0007669"/>
    <property type="project" value="InterPro"/>
</dbReference>
<dbReference type="GO" id="GO:0006412">
    <property type="term" value="P:translation"/>
    <property type="evidence" value="ECO:0007669"/>
    <property type="project" value="UniProtKB-UniRule"/>
</dbReference>
<dbReference type="HAMAP" id="MF_01363">
    <property type="entry name" value="Ribosomal_bL21"/>
    <property type="match status" value="1"/>
</dbReference>
<dbReference type="InterPro" id="IPR028909">
    <property type="entry name" value="bL21-like"/>
</dbReference>
<dbReference type="InterPro" id="IPR036164">
    <property type="entry name" value="bL21-like_sf"/>
</dbReference>
<dbReference type="InterPro" id="IPR001787">
    <property type="entry name" value="Ribosomal_bL21"/>
</dbReference>
<dbReference type="InterPro" id="IPR018258">
    <property type="entry name" value="Ribosomal_bL21_CS"/>
</dbReference>
<dbReference type="NCBIfam" id="TIGR00061">
    <property type="entry name" value="L21"/>
    <property type="match status" value="1"/>
</dbReference>
<dbReference type="PANTHER" id="PTHR21349">
    <property type="entry name" value="50S RIBOSOMAL PROTEIN L21"/>
    <property type="match status" value="1"/>
</dbReference>
<dbReference type="PANTHER" id="PTHR21349:SF0">
    <property type="entry name" value="LARGE RIBOSOMAL SUBUNIT PROTEIN BL21M"/>
    <property type="match status" value="1"/>
</dbReference>
<dbReference type="Pfam" id="PF00829">
    <property type="entry name" value="Ribosomal_L21p"/>
    <property type="match status" value="1"/>
</dbReference>
<dbReference type="SUPFAM" id="SSF141091">
    <property type="entry name" value="L21p-like"/>
    <property type="match status" value="1"/>
</dbReference>
<dbReference type="PROSITE" id="PS01169">
    <property type="entry name" value="RIBOSOMAL_L21"/>
    <property type="match status" value="1"/>
</dbReference>
<organism>
    <name type="scientific">Chloroherpeton thalassium (strain ATCC 35110 / GB-78)</name>
    <dbReference type="NCBI Taxonomy" id="517418"/>
    <lineage>
        <taxon>Bacteria</taxon>
        <taxon>Pseudomonadati</taxon>
        <taxon>Chlorobiota</taxon>
        <taxon>Chlorobiia</taxon>
        <taxon>Chlorobiales</taxon>
        <taxon>Chloroherpetonaceae</taxon>
        <taxon>Chloroherpeton</taxon>
    </lineage>
</organism>
<proteinExistence type="inferred from homology"/>
<sequence>MRALVEISDKQFFVTEGEKLFVPTQKAEAGDTLTFEKVLLQSDGAAASLSPSCKVTAKLLRHIKGDKVTVFKKKRRKRYRVTRGHRQGFSEIEILSVA</sequence>
<accession>B3QSH6</accession>
<reference key="1">
    <citation type="submission" date="2008-06" db="EMBL/GenBank/DDBJ databases">
        <title>Complete sequence of Chloroherpeton thalassium ATCC 35110.</title>
        <authorList>
            <consortium name="US DOE Joint Genome Institute"/>
            <person name="Lucas S."/>
            <person name="Copeland A."/>
            <person name="Lapidus A."/>
            <person name="Glavina del Rio T."/>
            <person name="Dalin E."/>
            <person name="Tice H."/>
            <person name="Bruce D."/>
            <person name="Goodwin L."/>
            <person name="Pitluck S."/>
            <person name="Schmutz J."/>
            <person name="Larimer F."/>
            <person name="Land M."/>
            <person name="Hauser L."/>
            <person name="Kyrpides N."/>
            <person name="Mikhailova N."/>
            <person name="Liu Z."/>
            <person name="Li T."/>
            <person name="Zhao F."/>
            <person name="Overmann J."/>
            <person name="Bryant D.A."/>
            <person name="Richardson P."/>
        </authorList>
    </citation>
    <scope>NUCLEOTIDE SEQUENCE [LARGE SCALE GENOMIC DNA]</scope>
    <source>
        <strain>ATCC 35110 / GB-78</strain>
    </source>
</reference>